<protein>
    <recommendedName>
        <fullName evidence="1">Probable chorismate pyruvate-lyase</fullName>
        <shortName evidence="1">CL</shortName>
        <shortName evidence="1">CPL</shortName>
        <ecNumber evidence="1">4.1.3.40</ecNumber>
    </recommendedName>
</protein>
<name>UBIC_ALBFT</name>
<comment type="function">
    <text evidence="1">Removes the pyruvyl group from chorismate, with concomitant aromatization of the ring, to provide 4-hydroxybenzoate (4HB) for the ubiquinone pathway.</text>
</comment>
<comment type="catalytic activity">
    <reaction evidence="1">
        <text>chorismate = 4-hydroxybenzoate + pyruvate</text>
        <dbReference type="Rhea" id="RHEA:16505"/>
        <dbReference type="ChEBI" id="CHEBI:15361"/>
        <dbReference type="ChEBI" id="CHEBI:17879"/>
        <dbReference type="ChEBI" id="CHEBI:29748"/>
        <dbReference type="EC" id="4.1.3.40"/>
    </reaction>
</comment>
<comment type="pathway">
    <text evidence="1">Cofactor biosynthesis; ubiquinone biosynthesis.</text>
</comment>
<comment type="subcellular location">
    <subcellularLocation>
        <location evidence="1">Cytoplasm</location>
    </subcellularLocation>
</comment>
<comment type="similarity">
    <text evidence="1">Belongs to the UbiC family.</text>
</comment>
<evidence type="ECO:0000255" key="1">
    <source>
        <dbReference type="HAMAP-Rule" id="MF_01632"/>
    </source>
</evidence>
<sequence>MKVWSKRNVQRGNRKRWVGATGSLSARLAAAGQRFSVQVLSQGLQALDPDEASALGLSRLKVGYVREVLLRVDEVAVVFARSVTAHPHSQGPWRSIRGLGTRPLADVLFGQHGIARTPLQFASLQVASSLHRHVAHAWLGATGAALASRVLPARRSVFTRGAAPLLVMEVFAAPHAPWGWLTTKTRRGPPALPRTKP</sequence>
<reference key="1">
    <citation type="submission" date="2006-02" db="EMBL/GenBank/DDBJ databases">
        <title>Complete sequence of chromosome of Rhodoferax ferrireducens DSM 15236.</title>
        <authorList>
            <person name="Copeland A."/>
            <person name="Lucas S."/>
            <person name="Lapidus A."/>
            <person name="Barry K."/>
            <person name="Detter J.C."/>
            <person name="Glavina del Rio T."/>
            <person name="Hammon N."/>
            <person name="Israni S."/>
            <person name="Pitluck S."/>
            <person name="Brettin T."/>
            <person name="Bruce D."/>
            <person name="Han C."/>
            <person name="Tapia R."/>
            <person name="Gilna P."/>
            <person name="Kiss H."/>
            <person name="Schmutz J."/>
            <person name="Larimer F."/>
            <person name="Land M."/>
            <person name="Kyrpides N."/>
            <person name="Ivanova N."/>
            <person name="Richardson P."/>
        </authorList>
    </citation>
    <scope>NUCLEOTIDE SEQUENCE [LARGE SCALE GENOMIC DNA]</scope>
    <source>
        <strain>ATCC BAA-621 / DSM 15236 / T118</strain>
    </source>
</reference>
<dbReference type="EC" id="4.1.3.40" evidence="1"/>
<dbReference type="EMBL" id="CP000267">
    <property type="protein sequence ID" value="ABD70726.1"/>
    <property type="molecule type" value="Genomic_DNA"/>
</dbReference>
<dbReference type="RefSeq" id="WP_011465292.1">
    <property type="nucleotide sequence ID" value="NC_007908.1"/>
</dbReference>
<dbReference type="SMR" id="Q21U27"/>
<dbReference type="STRING" id="338969.Rfer_3015"/>
<dbReference type="KEGG" id="rfr:Rfer_3015"/>
<dbReference type="eggNOG" id="COG3161">
    <property type="taxonomic scope" value="Bacteria"/>
</dbReference>
<dbReference type="HOGENOM" id="CLU_096824_2_0_4"/>
<dbReference type="OrthoDB" id="8606430at2"/>
<dbReference type="UniPathway" id="UPA00232"/>
<dbReference type="Proteomes" id="UP000008332">
    <property type="component" value="Chromosome"/>
</dbReference>
<dbReference type="GO" id="GO:0005829">
    <property type="term" value="C:cytosol"/>
    <property type="evidence" value="ECO:0007669"/>
    <property type="project" value="TreeGrafter"/>
</dbReference>
<dbReference type="GO" id="GO:0008813">
    <property type="term" value="F:chorismate lyase activity"/>
    <property type="evidence" value="ECO:0007669"/>
    <property type="project" value="UniProtKB-UniRule"/>
</dbReference>
<dbReference type="GO" id="GO:0042866">
    <property type="term" value="P:pyruvate biosynthetic process"/>
    <property type="evidence" value="ECO:0007669"/>
    <property type="project" value="UniProtKB-UniRule"/>
</dbReference>
<dbReference type="GO" id="GO:0006744">
    <property type="term" value="P:ubiquinone biosynthetic process"/>
    <property type="evidence" value="ECO:0007669"/>
    <property type="project" value="UniProtKB-UniRule"/>
</dbReference>
<dbReference type="Gene3D" id="3.40.1410.10">
    <property type="entry name" value="Chorismate lyase-like"/>
    <property type="match status" value="1"/>
</dbReference>
<dbReference type="HAMAP" id="MF_01632">
    <property type="entry name" value="UbiC"/>
    <property type="match status" value="1"/>
</dbReference>
<dbReference type="InterPro" id="IPR007440">
    <property type="entry name" value="Chorismate--pyruvate_lyase"/>
</dbReference>
<dbReference type="InterPro" id="IPR028978">
    <property type="entry name" value="Chorismate_lyase_/UTRA_dom_sf"/>
</dbReference>
<dbReference type="PANTHER" id="PTHR38683">
    <property type="entry name" value="CHORISMATE PYRUVATE-LYASE"/>
    <property type="match status" value="1"/>
</dbReference>
<dbReference type="PANTHER" id="PTHR38683:SF1">
    <property type="entry name" value="CHORISMATE PYRUVATE-LYASE"/>
    <property type="match status" value="1"/>
</dbReference>
<dbReference type="Pfam" id="PF04345">
    <property type="entry name" value="Chor_lyase"/>
    <property type="match status" value="1"/>
</dbReference>
<dbReference type="SUPFAM" id="SSF64288">
    <property type="entry name" value="Chorismate lyase-like"/>
    <property type="match status" value="1"/>
</dbReference>
<gene>
    <name evidence="1" type="primary">ubiC</name>
    <name type="ordered locus">Rfer_3015</name>
</gene>
<proteinExistence type="inferred from homology"/>
<keyword id="KW-0963">Cytoplasm</keyword>
<keyword id="KW-0456">Lyase</keyword>
<keyword id="KW-0670">Pyruvate</keyword>
<keyword id="KW-1185">Reference proteome</keyword>
<keyword id="KW-0831">Ubiquinone biosynthesis</keyword>
<organism>
    <name type="scientific">Albidiferax ferrireducens (strain ATCC BAA-621 / DSM 15236 / T118)</name>
    <name type="common">Rhodoferax ferrireducens</name>
    <dbReference type="NCBI Taxonomy" id="338969"/>
    <lineage>
        <taxon>Bacteria</taxon>
        <taxon>Pseudomonadati</taxon>
        <taxon>Pseudomonadota</taxon>
        <taxon>Betaproteobacteria</taxon>
        <taxon>Burkholderiales</taxon>
        <taxon>Comamonadaceae</taxon>
        <taxon>Rhodoferax</taxon>
    </lineage>
</organism>
<feature type="chain" id="PRO_0000255912" description="Probable chorismate pyruvate-lyase">
    <location>
        <begin position="1"/>
        <end position="197"/>
    </location>
</feature>
<feature type="binding site" evidence="1">
    <location>
        <position position="66"/>
    </location>
    <ligand>
        <name>substrate</name>
    </ligand>
</feature>
<feature type="binding site" evidence="1">
    <location>
        <position position="104"/>
    </location>
    <ligand>
        <name>substrate</name>
    </ligand>
</feature>
<feature type="binding site" evidence="1">
    <location>
        <position position="169"/>
    </location>
    <ligand>
        <name>substrate</name>
    </ligand>
</feature>
<accession>Q21U27</accession>